<protein>
    <recommendedName>
        <fullName evidence="1">UPF0761 membrane protein Spea_3909</fullName>
    </recommendedName>
</protein>
<sequence length="340" mass="37476">MKNKIAINQVRSFLLSIWAFFLHLLSRFKEDQVNIKAGHLAYVTLLSLVPIVAVMFSMLSAFPVFSGIREKLEGFVYDNFLPAAGDTVQIYINEFVANASKGTSVGIVALMVVALMLISAIDKALNSIWRTKEKRQAAVSFSMYWMVLTLGPVLVGASLVATSYIVSLKLFSETELSGVVPILIERLPMLFSVAAFLLLYMVVPIKKVKFLHALLGALVAAMLFELGKKGFAFYVTQFPSYEAIYGALATIPILFVWVYVSWVIVLVGAEITAGLPEYLHECKLIRETALAESQAETKTEEPVTESKNDGPNSSNDSGQDNVRGSEKTDEPAQDKQDKLD</sequence>
<name>Y3909_SHEPA</name>
<proteinExistence type="inferred from homology"/>
<keyword id="KW-0997">Cell inner membrane</keyword>
<keyword id="KW-1003">Cell membrane</keyword>
<keyword id="KW-0472">Membrane</keyword>
<keyword id="KW-1185">Reference proteome</keyword>
<keyword id="KW-0812">Transmembrane</keyword>
<keyword id="KW-1133">Transmembrane helix</keyword>
<comment type="subcellular location">
    <subcellularLocation>
        <location evidence="1">Cell inner membrane</location>
        <topology evidence="1">Multi-pass membrane protein</topology>
    </subcellularLocation>
</comment>
<comment type="similarity">
    <text evidence="1">Belongs to the UPF0761 family.</text>
</comment>
<reference key="1">
    <citation type="submission" date="2007-10" db="EMBL/GenBank/DDBJ databases">
        <title>Complete sequence of Shewanella pealeana ATCC 700345.</title>
        <authorList>
            <consortium name="US DOE Joint Genome Institute"/>
            <person name="Copeland A."/>
            <person name="Lucas S."/>
            <person name="Lapidus A."/>
            <person name="Barry K."/>
            <person name="Glavina del Rio T."/>
            <person name="Dalin E."/>
            <person name="Tice H."/>
            <person name="Pitluck S."/>
            <person name="Chertkov O."/>
            <person name="Brettin T."/>
            <person name="Bruce D."/>
            <person name="Detter J.C."/>
            <person name="Han C."/>
            <person name="Schmutz J."/>
            <person name="Larimer F."/>
            <person name="Land M."/>
            <person name="Hauser L."/>
            <person name="Kyrpides N."/>
            <person name="Kim E."/>
            <person name="Zhao J.-S.Z."/>
            <person name="Manno D."/>
            <person name="Hawari J."/>
            <person name="Richardson P."/>
        </authorList>
    </citation>
    <scope>NUCLEOTIDE SEQUENCE [LARGE SCALE GENOMIC DNA]</scope>
    <source>
        <strain>ATCC 700345 / ANG-SQ1</strain>
    </source>
</reference>
<dbReference type="EMBL" id="CP000851">
    <property type="protein sequence ID" value="ABV89219.1"/>
    <property type="molecule type" value="Genomic_DNA"/>
</dbReference>
<dbReference type="RefSeq" id="WP_012157100.1">
    <property type="nucleotide sequence ID" value="NC_009901.1"/>
</dbReference>
<dbReference type="STRING" id="398579.Spea_3909"/>
<dbReference type="KEGG" id="spl:Spea_3909"/>
<dbReference type="eggNOG" id="COG1295">
    <property type="taxonomic scope" value="Bacteria"/>
</dbReference>
<dbReference type="HOGENOM" id="CLU_032288_0_0_6"/>
<dbReference type="OrthoDB" id="9808671at2"/>
<dbReference type="Proteomes" id="UP000002608">
    <property type="component" value="Chromosome"/>
</dbReference>
<dbReference type="GO" id="GO:0005886">
    <property type="term" value="C:plasma membrane"/>
    <property type="evidence" value="ECO:0007669"/>
    <property type="project" value="UniProtKB-SubCell"/>
</dbReference>
<dbReference type="HAMAP" id="MF_00672">
    <property type="entry name" value="UPF0761"/>
    <property type="match status" value="1"/>
</dbReference>
<dbReference type="InterPro" id="IPR023679">
    <property type="entry name" value="UPF0761_bac"/>
</dbReference>
<dbReference type="InterPro" id="IPR017039">
    <property type="entry name" value="Virul_fac_BrkB"/>
</dbReference>
<dbReference type="NCBIfam" id="NF002457">
    <property type="entry name" value="PRK01637.1"/>
    <property type="match status" value="1"/>
</dbReference>
<dbReference type="NCBIfam" id="TIGR00765">
    <property type="entry name" value="yihY_not_rbn"/>
    <property type="match status" value="1"/>
</dbReference>
<dbReference type="PANTHER" id="PTHR30213">
    <property type="entry name" value="INNER MEMBRANE PROTEIN YHJD"/>
    <property type="match status" value="1"/>
</dbReference>
<dbReference type="PANTHER" id="PTHR30213:SF0">
    <property type="entry name" value="UPF0761 MEMBRANE PROTEIN YIHY"/>
    <property type="match status" value="1"/>
</dbReference>
<dbReference type="Pfam" id="PF03631">
    <property type="entry name" value="Virul_fac_BrkB"/>
    <property type="match status" value="1"/>
</dbReference>
<feature type="chain" id="PRO_1000082951" description="UPF0761 membrane protein Spea_3909">
    <location>
        <begin position="1"/>
        <end position="340"/>
    </location>
</feature>
<feature type="transmembrane region" description="Helical" evidence="1">
    <location>
        <begin position="5"/>
        <end position="25"/>
    </location>
</feature>
<feature type="transmembrane region" description="Helical" evidence="1">
    <location>
        <begin position="45"/>
        <end position="65"/>
    </location>
</feature>
<feature type="transmembrane region" description="Helical" evidence="1">
    <location>
        <begin position="102"/>
        <end position="122"/>
    </location>
</feature>
<feature type="transmembrane region" description="Helical" evidence="1">
    <location>
        <begin position="141"/>
        <end position="161"/>
    </location>
</feature>
<feature type="transmembrane region" description="Helical" evidence="1">
    <location>
        <begin position="179"/>
        <end position="199"/>
    </location>
</feature>
<feature type="transmembrane region" description="Helical" evidence="1">
    <location>
        <begin position="213"/>
        <end position="233"/>
    </location>
</feature>
<feature type="transmembrane region" description="Helical" evidence="1">
    <location>
        <begin position="247"/>
        <end position="267"/>
    </location>
</feature>
<feature type="region of interest" description="Disordered" evidence="2">
    <location>
        <begin position="292"/>
        <end position="340"/>
    </location>
</feature>
<feature type="compositionally biased region" description="Basic and acidic residues" evidence="2">
    <location>
        <begin position="295"/>
        <end position="308"/>
    </location>
</feature>
<feature type="compositionally biased region" description="Polar residues" evidence="2">
    <location>
        <begin position="309"/>
        <end position="322"/>
    </location>
</feature>
<feature type="compositionally biased region" description="Basic and acidic residues" evidence="2">
    <location>
        <begin position="323"/>
        <end position="340"/>
    </location>
</feature>
<organism>
    <name type="scientific">Shewanella pealeana (strain ATCC 700345 / ANG-SQ1)</name>
    <dbReference type="NCBI Taxonomy" id="398579"/>
    <lineage>
        <taxon>Bacteria</taxon>
        <taxon>Pseudomonadati</taxon>
        <taxon>Pseudomonadota</taxon>
        <taxon>Gammaproteobacteria</taxon>
        <taxon>Alteromonadales</taxon>
        <taxon>Shewanellaceae</taxon>
        <taxon>Shewanella</taxon>
    </lineage>
</organism>
<evidence type="ECO:0000255" key="1">
    <source>
        <dbReference type="HAMAP-Rule" id="MF_00672"/>
    </source>
</evidence>
<evidence type="ECO:0000256" key="2">
    <source>
        <dbReference type="SAM" id="MobiDB-lite"/>
    </source>
</evidence>
<accession>A8H9I2</accession>
<gene>
    <name type="ordered locus">Spea_3909</name>
</gene>